<proteinExistence type="inferred from homology"/>
<evidence type="ECO:0000255" key="1">
    <source>
        <dbReference type="HAMAP-Rule" id="MF_00473"/>
    </source>
</evidence>
<keyword id="KW-0963">Cytoplasm</keyword>
<keyword id="KW-0312">Gluconeogenesis</keyword>
<keyword id="KW-0324">Glycolysis</keyword>
<keyword id="KW-0413">Isomerase</keyword>
<keyword id="KW-0597">Phosphoprotein</keyword>
<sequence>MSTHVTFDYSKALSFIGENELTYLRDAVKVTHHAIHEKTGAGNDFLGWVELPLQYDKEEFARIQKCAEKIKNDSDILLVVGIGGSYLGARAAIEMLNHSFYNTLSKEQRKTPQVLFVGQNISSTYMKDLMDVLEGKDFSINVISKSGTTTEPAIAFRIFRKLLEEKYGKEEARKRIYATTDKARGALKTLSDNEGYETFVIPDDVGGRFSVLTPVGLLPIAVSGLNIEEMMKGAAAGHNDFAKSELEENPAYQYAVVRNALYNKGKTIEMLVNYEPALHYFSEWWKQLFGESEGKDQKGIFPSSANFSTDLHSLGQYIQEGRRDLFETVLKVGKSTHELKIELDDNDLDGLNYLAGETIDFVNTKAYEGTLLAHSDGGVPNLIVNIPELNEYTFGYLVYFFEKACAMSGYLLGVNPFDQPGVEAYKKNMFALLGKPGFEELKAELEERLK</sequence>
<dbReference type="EC" id="5.3.1.9" evidence="1"/>
<dbReference type="EMBL" id="CP000903">
    <property type="protein sequence ID" value="ABY45870.1"/>
    <property type="molecule type" value="Genomic_DNA"/>
</dbReference>
<dbReference type="RefSeq" id="WP_002015845.1">
    <property type="nucleotide sequence ID" value="NC_010184.1"/>
</dbReference>
<dbReference type="SMR" id="A9VMW5"/>
<dbReference type="KEGG" id="bwe:BcerKBAB4_4720"/>
<dbReference type="eggNOG" id="COG0166">
    <property type="taxonomic scope" value="Bacteria"/>
</dbReference>
<dbReference type="HOGENOM" id="CLU_037303_0_1_9"/>
<dbReference type="UniPathway" id="UPA00109">
    <property type="reaction ID" value="UER00181"/>
</dbReference>
<dbReference type="UniPathway" id="UPA00138"/>
<dbReference type="Proteomes" id="UP000002154">
    <property type="component" value="Chromosome"/>
</dbReference>
<dbReference type="GO" id="GO:0005829">
    <property type="term" value="C:cytosol"/>
    <property type="evidence" value="ECO:0007669"/>
    <property type="project" value="TreeGrafter"/>
</dbReference>
<dbReference type="GO" id="GO:0097367">
    <property type="term" value="F:carbohydrate derivative binding"/>
    <property type="evidence" value="ECO:0007669"/>
    <property type="project" value="InterPro"/>
</dbReference>
<dbReference type="GO" id="GO:0004347">
    <property type="term" value="F:glucose-6-phosphate isomerase activity"/>
    <property type="evidence" value="ECO:0007669"/>
    <property type="project" value="UniProtKB-UniRule"/>
</dbReference>
<dbReference type="GO" id="GO:0048029">
    <property type="term" value="F:monosaccharide binding"/>
    <property type="evidence" value="ECO:0007669"/>
    <property type="project" value="TreeGrafter"/>
</dbReference>
<dbReference type="GO" id="GO:0006094">
    <property type="term" value="P:gluconeogenesis"/>
    <property type="evidence" value="ECO:0007669"/>
    <property type="project" value="UniProtKB-UniRule"/>
</dbReference>
<dbReference type="GO" id="GO:0051156">
    <property type="term" value="P:glucose 6-phosphate metabolic process"/>
    <property type="evidence" value="ECO:0007669"/>
    <property type="project" value="TreeGrafter"/>
</dbReference>
<dbReference type="GO" id="GO:0006096">
    <property type="term" value="P:glycolytic process"/>
    <property type="evidence" value="ECO:0007669"/>
    <property type="project" value="UniProtKB-UniRule"/>
</dbReference>
<dbReference type="CDD" id="cd05015">
    <property type="entry name" value="SIS_PGI_1"/>
    <property type="match status" value="1"/>
</dbReference>
<dbReference type="CDD" id="cd05016">
    <property type="entry name" value="SIS_PGI_2"/>
    <property type="match status" value="1"/>
</dbReference>
<dbReference type="FunFam" id="3.40.50.10490:FF:000015">
    <property type="entry name" value="Glucose-6-phosphate isomerase"/>
    <property type="match status" value="1"/>
</dbReference>
<dbReference type="FunFam" id="3.40.50.10490:FF:000016">
    <property type="entry name" value="Glucose-6-phosphate isomerase"/>
    <property type="match status" value="1"/>
</dbReference>
<dbReference type="FunFam" id="3.40.50.10490:FF:000020">
    <property type="entry name" value="Glucose-6-phosphate isomerase"/>
    <property type="match status" value="1"/>
</dbReference>
<dbReference type="Gene3D" id="3.40.50.10490">
    <property type="entry name" value="Glucose-6-phosphate isomerase like protein, domain 1"/>
    <property type="match status" value="3"/>
</dbReference>
<dbReference type="HAMAP" id="MF_00473">
    <property type="entry name" value="G6P_isomerase"/>
    <property type="match status" value="1"/>
</dbReference>
<dbReference type="InterPro" id="IPR001672">
    <property type="entry name" value="G6P_Isomerase"/>
</dbReference>
<dbReference type="InterPro" id="IPR018189">
    <property type="entry name" value="Phosphoglucose_isomerase_CS"/>
</dbReference>
<dbReference type="InterPro" id="IPR046348">
    <property type="entry name" value="SIS_dom_sf"/>
</dbReference>
<dbReference type="InterPro" id="IPR035476">
    <property type="entry name" value="SIS_PGI_1"/>
</dbReference>
<dbReference type="InterPro" id="IPR035482">
    <property type="entry name" value="SIS_PGI_2"/>
</dbReference>
<dbReference type="NCBIfam" id="NF010697">
    <property type="entry name" value="PRK14097.1"/>
    <property type="match status" value="1"/>
</dbReference>
<dbReference type="PANTHER" id="PTHR11469">
    <property type="entry name" value="GLUCOSE-6-PHOSPHATE ISOMERASE"/>
    <property type="match status" value="1"/>
</dbReference>
<dbReference type="PANTHER" id="PTHR11469:SF1">
    <property type="entry name" value="GLUCOSE-6-PHOSPHATE ISOMERASE"/>
    <property type="match status" value="1"/>
</dbReference>
<dbReference type="Pfam" id="PF00342">
    <property type="entry name" value="PGI"/>
    <property type="match status" value="1"/>
</dbReference>
<dbReference type="PRINTS" id="PR00662">
    <property type="entry name" value="G6PISOMERASE"/>
</dbReference>
<dbReference type="SUPFAM" id="SSF53697">
    <property type="entry name" value="SIS domain"/>
    <property type="match status" value="1"/>
</dbReference>
<dbReference type="PROSITE" id="PS00765">
    <property type="entry name" value="P_GLUCOSE_ISOMERASE_1"/>
    <property type="match status" value="1"/>
</dbReference>
<dbReference type="PROSITE" id="PS00174">
    <property type="entry name" value="P_GLUCOSE_ISOMERASE_2"/>
    <property type="match status" value="1"/>
</dbReference>
<dbReference type="PROSITE" id="PS51463">
    <property type="entry name" value="P_GLUCOSE_ISOMERASE_3"/>
    <property type="match status" value="1"/>
</dbReference>
<reference key="1">
    <citation type="journal article" date="2008" name="Chem. Biol. Interact.">
        <title>Extending the Bacillus cereus group genomics to putative food-borne pathogens of different toxicity.</title>
        <authorList>
            <person name="Lapidus A."/>
            <person name="Goltsman E."/>
            <person name="Auger S."/>
            <person name="Galleron N."/>
            <person name="Segurens B."/>
            <person name="Dossat C."/>
            <person name="Land M.L."/>
            <person name="Broussolle V."/>
            <person name="Brillard J."/>
            <person name="Guinebretiere M.-H."/>
            <person name="Sanchis V."/>
            <person name="Nguen-the C."/>
            <person name="Lereclus D."/>
            <person name="Richardson P."/>
            <person name="Wincker P."/>
            <person name="Weissenbach J."/>
            <person name="Ehrlich S.D."/>
            <person name="Sorokin A."/>
        </authorList>
    </citation>
    <scope>NUCLEOTIDE SEQUENCE [LARGE SCALE GENOMIC DNA]</scope>
    <source>
        <strain>KBAB4</strain>
    </source>
</reference>
<name>G6PI_BACMK</name>
<feature type="chain" id="PRO_1000125695" description="Glucose-6-phosphate isomerase">
    <location>
        <begin position="1"/>
        <end position="450"/>
    </location>
</feature>
<feature type="active site" description="Proton donor" evidence="1">
    <location>
        <position position="291"/>
    </location>
</feature>
<feature type="active site" evidence="1">
    <location>
        <position position="312"/>
    </location>
</feature>
<feature type="active site" evidence="1">
    <location>
        <position position="426"/>
    </location>
</feature>
<feature type="modified residue" description="Phosphothreonine" evidence="1">
    <location>
        <position position="39"/>
    </location>
</feature>
<protein>
    <recommendedName>
        <fullName evidence="1">Glucose-6-phosphate isomerase</fullName>
        <shortName evidence="1">GPI</shortName>
        <ecNumber evidence="1">5.3.1.9</ecNumber>
    </recommendedName>
    <alternativeName>
        <fullName evidence="1">Phosphoglucose isomerase</fullName>
        <shortName evidence="1">PGI</shortName>
    </alternativeName>
    <alternativeName>
        <fullName evidence="1">Phosphohexose isomerase</fullName>
        <shortName evidence="1">PHI</shortName>
    </alternativeName>
</protein>
<organism>
    <name type="scientific">Bacillus mycoides (strain KBAB4)</name>
    <name type="common">Bacillus weihenstephanensis</name>
    <dbReference type="NCBI Taxonomy" id="315730"/>
    <lineage>
        <taxon>Bacteria</taxon>
        <taxon>Bacillati</taxon>
        <taxon>Bacillota</taxon>
        <taxon>Bacilli</taxon>
        <taxon>Bacillales</taxon>
        <taxon>Bacillaceae</taxon>
        <taxon>Bacillus</taxon>
        <taxon>Bacillus cereus group</taxon>
    </lineage>
</organism>
<gene>
    <name evidence="1" type="primary">pgi</name>
    <name type="ordered locus">BcerKBAB4_4720</name>
</gene>
<comment type="function">
    <text evidence="1">Catalyzes the reversible isomerization of glucose-6-phosphate to fructose-6-phosphate.</text>
</comment>
<comment type="catalytic activity">
    <reaction evidence="1">
        <text>alpha-D-glucose 6-phosphate = beta-D-fructose 6-phosphate</text>
        <dbReference type="Rhea" id="RHEA:11816"/>
        <dbReference type="ChEBI" id="CHEBI:57634"/>
        <dbReference type="ChEBI" id="CHEBI:58225"/>
        <dbReference type="EC" id="5.3.1.9"/>
    </reaction>
</comment>
<comment type="pathway">
    <text evidence="1">Carbohydrate biosynthesis; gluconeogenesis.</text>
</comment>
<comment type="pathway">
    <text evidence="1">Carbohydrate degradation; glycolysis; D-glyceraldehyde 3-phosphate and glycerone phosphate from D-glucose: step 2/4.</text>
</comment>
<comment type="subcellular location">
    <subcellularLocation>
        <location evidence="1">Cytoplasm</location>
    </subcellularLocation>
</comment>
<comment type="similarity">
    <text evidence="1">Belongs to the GPI family.</text>
</comment>
<accession>A9VMW5</accession>